<comment type="function">
    <text evidence="1">One of the primary rRNA binding proteins, it binds directly to 16S rRNA where it nucleates assembly of the head domain of the 30S subunit. Is located at the subunit interface close to the decoding center, probably blocks exit of the E-site tRNA.</text>
</comment>
<comment type="subunit">
    <text evidence="1">Part of the 30S ribosomal subunit. Contacts proteins S9 and S11.</text>
</comment>
<comment type="similarity">
    <text evidence="1">Belongs to the universal ribosomal protein uS7 family.</text>
</comment>
<sequence>MARKCGAVKLRSCCDPLFEAPEVGRLVNLVMVSGKKTVAARIVYTALAMLSPDRRRSYELLMQALHNIKPSAEIRTRRMGGASYRVPAEICSKRRMSLALRWLKSAAMRRRERYAHVRLYNEILDALSRRGGAVRQRDEVHRLAHANRAFSHSRRG</sequence>
<dbReference type="EMBL" id="AF481103">
    <property type="protein sequence ID" value="AAM76003.1"/>
    <property type="molecule type" value="Genomic_DNA"/>
</dbReference>
<dbReference type="SMR" id="P59064"/>
<dbReference type="STRING" id="1053648.TCP_115"/>
<dbReference type="GO" id="GO:0015935">
    <property type="term" value="C:small ribosomal subunit"/>
    <property type="evidence" value="ECO:0007669"/>
    <property type="project" value="InterPro"/>
</dbReference>
<dbReference type="GO" id="GO:0019843">
    <property type="term" value="F:rRNA binding"/>
    <property type="evidence" value="ECO:0007669"/>
    <property type="project" value="UniProtKB-UniRule"/>
</dbReference>
<dbReference type="GO" id="GO:0003735">
    <property type="term" value="F:structural constituent of ribosome"/>
    <property type="evidence" value="ECO:0007669"/>
    <property type="project" value="InterPro"/>
</dbReference>
<dbReference type="GO" id="GO:0000049">
    <property type="term" value="F:tRNA binding"/>
    <property type="evidence" value="ECO:0007669"/>
    <property type="project" value="UniProtKB-UniRule"/>
</dbReference>
<dbReference type="GO" id="GO:0006412">
    <property type="term" value="P:translation"/>
    <property type="evidence" value="ECO:0007669"/>
    <property type="project" value="UniProtKB-UniRule"/>
</dbReference>
<dbReference type="CDD" id="cd14869">
    <property type="entry name" value="uS7_Bacteria"/>
    <property type="match status" value="1"/>
</dbReference>
<dbReference type="Gene3D" id="1.10.455.10">
    <property type="entry name" value="Ribosomal protein S7 domain"/>
    <property type="match status" value="1"/>
</dbReference>
<dbReference type="HAMAP" id="MF_00480_B">
    <property type="entry name" value="Ribosomal_uS7_B"/>
    <property type="match status" value="1"/>
</dbReference>
<dbReference type="InterPro" id="IPR000235">
    <property type="entry name" value="Ribosomal_uS7"/>
</dbReference>
<dbReference type="InterPro" id="IPR005717">
    <property type="entry name" value="Ribosomal_uS7_bac/org-type"/>
</dbReference>
<dbReference type="InterPro" id="IPR023798">
    <property type="entry name" value="Ribosomal_uS7_dom"/>
</dbReference>
<dbReference type="InterPro" id="IPR036823">
    <property type="entry name" value="Ribosomal_uS7_dom_sf"/>
</dbReference>
<dbReference type="NCBIfam" id="TIGR01029">
    <property type="entry name" value="rpsG_bact"/>
    <property type="match status" value="1"/>
</dbReference>
<dbReference type="PANTHER" id="PTHR11205">
    <property type="entry name" value="RIBOSOMAL PROTEIN S7"/>
    <property type="match status" value="1"/>
</dbReference>
<dbReference type="Pfam" id="PF00177">
    <property type="entry name" value="Ribosomal_S7"/>
    <property type="match status" value="1"/>
</dbReference>
<dbReference type="PIRSF" id="PIRSF002122">
    <property type="entry name" value="RPS7p_RPS7a_RPS5e_RPS7o"/>
    <property type="match status" value="1"/>
</dbReference>
<dbReference type="SUPFAM" id="SSF47973">
    <property type="entry name" value="Ribosomal protein S7"/>
    <property type="match status" value="1"/>
</dbReference>
<evidence type="ECO:0000255" key="1">
    <source>
        <dbReference type="HAMAP-Rule" id="MF_00480"/>
    </source>
</evidence>
<evidence type="ECO:0000305" key="2"/>
<proteinExistence type="inferred from homology"/>
<gene>
    <name evidence="1" type="primary">rpsG</name>
    <name evidence="1" type="synonym">rps7</name>
</gene>
<accession>P59064</accession>
<keyword id="KW-0687">Ribonucleoprotein</keyword>
<keyword id="KW-0689">Ribosomal protein</keyword>
<keyword id="KW-0694">RNA-binding</keyword>
<keyword id="KW-0699">rRNA-binding</keyword>
<keyword id="KW-0820">tRNA-binding</keyword>
<feature type="chain" id="PRO_0000124240" description="Small ribosomal subunit protein uS7">
    <location>
        <begin position="1"/>
        <end position="156"/>
    </location>
</feature>
<name>RS7_TREPR</name>
<reference key="1">
    <citation type="journal article" date="2002" name="Appl. Environ. Microbiol.">
        <title>The genetic properties of the primary endosymbionts of mealybugs differ from those of other endosymbionts of plant sap-sucking insects.</title>
        <authorList>
            <person name="Baumann L."/>
            <person name="Thao M.L."/>
            <person name="Hess J.M."/>
            <person name="Johnson M.W."/>
            <person name="Baumann P."/>
        </authorList>
    </citation>
    <scope>NUCLEOTIDE SEQUENCE [GENOMIC DNA]</scope>
</reference>
<protein>
    <recommendedName>
        <fullName evidence="1">Small ribosomal subunit protein uS7</fullName>
    </recommendedName>
    <alternativeName>
        <fullName evidence="2">30S ribosomal protein S7</fullName>
    </alternativeName>
</protein>
<organism>
    <name type="scientific">Tremblaya princeps</name>
    <dbReference type="NCBI Taxonomy" id="189385"/>
    <lineage>
        <taxon>Bacteria</taxon>
        <taxon>Pseudomonadati</taxon>
        <taxon>Pseudomonadota</taxon>
        <taxon>Betaproteobacteria</taxon>
        <taxon>Candidatus Tremblaya</taxon>
    </lineage>
</organism>